<evidence type="ECO:0000250" key="1">
    <source>
        <dbReference type="UniProtKB" id="P61008"/>
    </source>
</evidence>
<evidence type="ECO:0000250" key="2">
    <source>
        <dbReference type="UniProtKB" id="Q12133"/>
    </source>
</evidence>
<evidence type="ECO:0000255" key="3"/>
<evidence type="ECO:0000269" key="4">
    <source>
    </source>
</evidence>
<evidence type="ECO:0000269" key="5">
    <source>
    </source>
</evidence>
<evidence type="ECO:0000269" key="6">
    <source>
    </source>
</evidence>
<evidence type="ECO:0000269" key="7">
    <source>
    </source>
</evidence>
<evidence type="ECO:0000305" key="8"/>
<evidence type="ECO:0007744" key="9">
    <source>
        <dbReference type="PDB" id="7P2P"/>
    </source>
</evidence>
<evidence type="ECO:0007744" key="10">
    <source>
        <dbReference type="PDB" id="7P2Q"/>
    </source>
</evidence>
<dbReference type="EMBL" id="AL136660">
    <property type="protein sequence ID" value="CAB66595.1"/>
    <property type="molecule type" value="mRNA"/>
</dbReference>
<dbReference type="EMBL" id="AK026302">
    <property type="protein sequence ID" value="BAB15437.1"/>
    <property type="molecule type" value="mRNA"/>
</dbReference>
<dbReference type="EMBL" id="AY359044">
    <property type="protein sequence ID" value="AAQ89403.1"/>
    <property type="molecule type" value="mRNA"/>
</dbReference>
<dbReference type="EMBL" id="BC047290">
    <property type="protein sequence ID" value="AAH47290.1"/>
    <property type="molecule type" value="mRNA"/>
</dbReference>
<dbReference type="CCDS" id="CCDS54823.1"/>
<dbReference type="RefSeq" id="NP_068747.1">
    <property type="nucleotide sequence ID" value="NM_021928.4"/>
</dbReference>
<dbReference type="PDB" id="7P2P">
    <property type="method" value="EM"/>
    <property type="resolution" value="4.90 A"/>
    <property type="chains" value="B=1-180"/>
</dbReference>
<dbReference type="PDB" id="7P2Q">
    <property type="method" value="EM"/>
    <property type="resolution" value="4.90 A"/>
    <property type="chains" value="B=1-180"/>
</dbReference>
<dbReference type="PDBsum" id="7P2P"/>
<dbReference type="PDBsum" id="7P2Q"/>
<dbReference type="EMDB" id="EMD-13171"/>
<dbReference type="EMDB" id="EMD-13172"/>
<dbReference type="SMR" id="P61009"/>
<dbReference type="BioGRID" id="121940">
    <property type="interactions" value="170"/>
</dbReference>
<dbReference type="ComplexPortal" id="CPX-2847">
    <property type="entry name" value="Signal peptidase complex, SEC11A variant"/>
</dbReference>
<dbReference type="ComplexPortal" id="CPX-7205">
    <property type="entry name" value="Signal peptidase complex, SEC11C variant"/>
</dbReference>
<dbReference type="FunCoup" id="P61009">
    <property type="interactions" value="1483"/>
</dbReference>
<dbReference type="IntAct" id="P61009">
    <property type="interactions" value="81"/>
</dbReference>
<dbReference type="MINT" id="P61009"/>
<dbReference type="STRING" id="9606.ENSP00000427463"/>
<dbReference type="GlyCosmos" id="P61009">
    <property type="glycosylation" value="1 site, No reported glycans"/>
</dbReference>
<dbReference type="GlyGen" id="P61009">
    <property type="glycosylation" value="2 sites, 1 O-linked glycan (1 site)"/>
</dbReference>
<dbReference type="iPTMnet" id="P61009"/>
<dbReference type="PhosphoSitePlus" id="P61009"/>
<dbReference type="SwissPalm" id="P61009"/>
<dbReference type="BioMuta" id="SPCS3"/>
<dbReference type="DMDM" id="46577648"/>
<dbReference type="jPOST" id="P61009"/>
<dbReference type="MassIVE" id="P61009"/>
<dbReference type="PaxDb" id="9606-ENSP00000427463"/>
<dbReference type="PeptideAtlas" id="P61009"/>
<dbReference type="ProteomicsDB" id="57246"/>
<dbReference type="Pumba" id="P61009"/>
<dbReference type="TopDownProteomics" id="P61009"/>
<dbReference type="Antibodypedia" id="28660">
    <property type="antibodies" value="69 antibodies from 21 providers"/>
</dbReference>
<dbReference type="DNASU" id="60559"/>
<dbReference type="Ensembl" id="ENST00000503362.2">
    <property type="protein sequence ID" value="ENSP00000427463.1"/>
    <property type="gene ID" value="ENSG00000129128.13"/>
</dbReference>
<dbReference type="GeneID" id="60559"/>
<dbReference type="KEGG" id="hsa:60559"/>
<dbReference type="MANE-Select" id="ENST00000503362.2">
    <property type="protein sequence ID" value="ENSP00000427463.1"/>
    <property type="RefSeq nucleotide sequence ID" value="NM_021928.4"/>
    <property type="RefSeq protein sequence ID" value="NP_068747.1"/>
</dbReference>
<dbReference type="UCSC" id="uc003iur.5">
    <property type="organism name" value="human"/>
</dbReference>
<dbReference type="AGR" id="HGNC:26212"/>
<dbReference type="CTD" id="60559"/>
<dbReference type="DisGeNET" id="60559"/>
<dbReference type="GeneCards" id="SPCS3"/>
<dbReference type="HGNC" id="HGNC:26212">
    <property type="gene designation" value="SPCS3"/>
</dbReference>
<dbReference type="HPA" id="ENSG00000129128">
    <property type="expression patterns" value="Low tissue specificity"/>
</dbReference>
<dbReference type="MIM" id="618854">
    <property type="type" value="gene"/>
</dbReference>
<dbReference type="neXtProt" id="NX_P61009"/>
<dbReference type="OpenTargets" id="ENSG00000129128"/>
<dbReference type="PharmGKB" id="PA134910080"/>
<dbReference type="VEuPathDB" id="HostDB:ENSG00000129128"/>
<dbReference type="eggNOG" id="KOG3372">
    <property type="taxonomic scope" value="Eukaryota"/>
</dbReference>
<dbReference type="GeneTree" id="ENSGT00390000009223"/>
<dbReference type="HOGENOM" id="CLU_068714_1_0_1"/>
<dbReference type="InParanoid" id="P61009"/>
<dbReference type="OMA" id="FWDDGHG"/>
<dbReference type="OrthoDB" id="10261524at2759"/>
<dbReference type="PAN-GO" id="P61009">
    <property type="GO annotations" value="3 GO annotations based on evolutionary models"/>
</dbReference>
<dbReference type="PhylomeDB" id="P61009"/>
<dbReference type="TreeFam" id="TF300185"/>
<dbReference type="PathwayCommons" id="P61009"/>
<dbReference type="Reactome" id="R-HSA-1799339">
    <property type="pathway name" value="SRP-dependent cotranslational protein targeting to membrane"/>
</dbReference>
<dbReference type="Reactome" id="R-HSA-381771">
    <property type="pathway name" value="Synthesis, secretion, and inactivation of Glucagon-like Peptide-1 (GLP-1)"/>
</dbReference>
<dbReference type="Reactome" id="R-HSA-400511">
    <property type="pathway name" value="Synthesis, secretion, and inactivation of Glucose-dependent Insulinotropic Polypeptide (GIP)"/>
</dbReference>
<dbReference type="Reactome" id="R-HSA-422085">
    <property type="pathway name" value="Synthesis, secretion, and deacylation of Ghrelin"/>
</dbReference>
<dbReference type="Reactome" id="R-HSA-9828806">
    <property type="pathway name" value="Maturation of hRSV A proteins"/>
</dbReference>
<dbReference type="SignaLink" id="P61009"/>
<dbReference type="BioGRID-ORCS" id="60559">
    <property type="hits" value="748 hits in 1165 CRISPR screens"/>
</dbReference>
<dbReference type="ChiTaRS" id="SPCS3">
    <property type="organism name" value="human"/>
</dbReference>
<dbReference type="GenomeRNAi" id="60559"/>
<dbReference type="Pharos" id="P61009">
    <property type="development level" value="Tbio"/>
</dbReference>
<dbReference type="PRO" id="PR:P61009"/>
<dbReference type="Proteomes" id="UP000005640">
    <property type="component" value="Chromosome 4"/>
</dbReference>
<dbReference type="RNAct" id="P61009">
    <property type="molecule type" value="protein"/>
</dbReference>
<dbReference type="Bgee" id="ENSG00000129128">
    <property type="expression patterns" value="Expressed in corpus epididymis and 212 other cell types or tissues"/>
</dbReference>
<dbReference type="GO" id="GO:0005783">
    <property type="term" value="C:endoplasmic reticulum"/>
    <property type="evidence" value="ECO:0000314"/>
    <property type="project" value="LIFEdb"/>
</dbReference>
<dbReference type="GO" id="GO:0005789">
    <property type="term" value="C:endoplasmic reticulum membrane"/>
    <property type="evidence" value="ECO:0000314"/>
    <property type="project" value="ComplexPortal"/>
</dbReference>
<dbReference type="GO" id="GO:0005787">
    <property type="term" value="C:signal peptidase complex"/>
    <property type="evidence" value="ECO:0000353"/>
    <property type="project" value="ComplexPortal"/>
</dbReference>
<dbReference type="GO" id="GO:0045047">
    <property type="term" value="P:protein targeting to ER"/>
    <property type="evidence" value="ECO:0000318"/>
    <property type="project" value="GO_Central"/>
</dbReference>
<dbReference type="GO" id="GO:0006508">
    <property type="term" value="P:proteolysis"/>
    <property type="evidence" value="ECO:0000314"/>
    <property type="project" value="UniProtKB"/>
</dbReference>
<dbReference type="GO" id="GO:0006465">
    <property type="term" value="P:signal peptide processing"/>
    <property type="evidence" value="ECO:0000314"/>
    <property type="project" value="ComplexPortal"/>
</dbReference>
<dbReference type="GO" id="GO:0019082">
    <property type="term" value="P:viral protein processing"/>
    <property type="evidence" value="ECO:0000315"/>
    <property type="project" value="UniProtKB"/>
</dbReference>
<dbReference type="InterPro" id="IPR007653">
    <property type="entry name" value="SPC3"/>
</dbReference>
<dbReference type="PANTHER" id="PTHR12804">
    <property type="entry name" value="MICROSOMAL SIGNAL PEPTIDASE 23 KD SUBUNIT SPC22/23"/>
    <property type="match status" value="1"/>
</dbReference>
<dbReference type="PANTHER" id="PTHR12804:SF0">
    <property type="entry name" value="SIGNAL PEPTIDASE COMPLEX SUBUNIT 3"/>
    <property type="match status" value="1"/>
</dbReference>
<dbReference type="Pfam" id="PF04573">
    <property type="entry name" value="SPC22"/>
    <property type="match status" value="1"/>
</dbReference>
<dbReference type="PIRSF" id="PIRSF016089">
    <property type="entry name" value="SPC22"/>
    <property type="match status" value="1"/>
</dbReference>
<protein>
    <recommendedName>
        <fullName>Signal peptidase complex subunit 3</fullName>
    </recommendedName>
    <alternativeName>
        <fullName>Microsomal signal peptidase 22/23 kDa subunit</fullName>
        <shortName>SPC22/23</shortName>
        <shortName>SPase 22/23 kDa subunit</shortName>
    </alternativeName>
</protein>
<organism>
    <name type="scientific">Homo sapiens</name>
    <name type="common">Human</name>
    <dbReference type="NCBI Taxonomy" id="9606"/>
    <lineage>
        <taxon>Eukaryota</taxon>
        <taxon>Metazoa</taxon>
        <taxon>Chordata</taxon>
        <taxon>Craniata</taxon>
        <taxon>Vertebrata</taxon>
        <taxon>Euteleostomi</taxon>
        <taxon>Mammalia</taxon>
        <taxon>Eutheria</taxon>
        <taxon>Euarchontoglires</taxon>
        <taxon>Primates</taxon>
        <taxon>Haplorrhini</taxon>
        <taxon>Catarrhini</taxon>
        <taxon>Hominidae</taxon>
        <taxon>Homo</taxon>
    </lineage>
</organism>
<sequence length="180" mass="20313">MNTVLSRANSLFAFSLSVMAALTFGCFITTAFKDRSVPVRLHVSRIMLKNVEDFTGPRERSDLGFITFDITADLENIFDWNVKQLFLYLSAEYSTKNNALNQVVLWDKIVLRGDNPKLLLKDMKTKYFFFDDGNGLKGNRNVTLTLSWNVVPNAGILPLVTGSGHVSVPFPDTYEITKSY</sequence>
<gene>
    <name type="primary">SPCS3</name>
    <name type="synonym">SPC22</name>
    <name type="ORF">UNQ1841/PRO3567</name>
</gene>
<comment type="function">
    <text evidence="2 6 7">Essential component of the signal peptidase complex (SPC) which catalyzes the cleavage of N-terminal signal sequences from nascent proteins as they are translocated into the lumen of the endoplasmic reticulum (PubMed:27499293, PubMed:34388369). Essential for the SPC catalytic activity, possibly by stabilizing and positioning the active center of the complex close to the lumenal surface (By similarity).</text>
</comment>
<comment type="function">
    <text evidence="5">(Microbial infection) Plays an important role in virion production of flaviviruses such as West Nile virus, Japanese enchephalitis virus, Dengue virus type 2 and Yellow Fever virus.</text>
</comment>
<comment type="subunit">
    <text evidence="7">Component of the signal peptidase complex paralog A (SPC-A) composed of a catalytic subunit SEC11A and three accessory subunits SPCS1, SPCS2 and SPCS3 (PubMed:34388369). Component of the signal peptidase complex paralog C (SPC-C) composed of a catalytic subunit SEC11C and three accessory subunits SPCS1, SPCS2 and SPCS3 (PubMed:34388369). Within the complex, interacts with SEC11A or SEC11C and SPCS1 (PubMed:34388369). The complex induces a local thinning of the ER membrane which is used to measure the length of the signal peptide (SP) h-region of protein substrates (PubMed:34388369). This ensures the selectivity of the complex towards h-regions shorter than 18-20 amino acids (PubMed:34388369).</text>
</comment>
<comment type="interaction">
    <interactant intactId="EBI-6166040">
        <id>P61009</id>
    </interactant>
    <interactant intactId="EBI-930964">
        <id>P54253</id>
        <label>ATXN1</label>
    </interactant>
    <organismsDiffer>false</organismsDiffer>
    <experiments>4</experiments>
</comment>
<comment type="interaction">
    <interactant intactId="EBI-6166040">
        <id>P61009</id>
    </interactant>
    <interactant intactId="EBI-466029">
        <id>P42858</id>
        <label>HTT</label>
    </interactant>
    <organismsDiffer>false</organismsDiffer>
    <experiments>6</experiments>
</comment>
<comment type="interaction">
    <interactant intactId="EBI-6166040">
        <id>P61009</id>
    </interactant>
    <interactant intactId="EBI-1042500">
        <id>P67812</id>
        <label>SEC11A</label>
    </interactant>
    <organismsDiffer>false</organismsDiffer>
    <experiments>6</experiments>
</comment>
<comment type="interaction">
    <interactant intactId="EBI-6166040">
        <id>P61009</id>
    </interactant>
    <interactant intactId="EBI-2855401">
        <id>Q9BY50</id>
        <label>SEC11C</label>
    </interactant>
    <organismsDiffer>false</organismsDiffer>
    <experiments>7</experiments>
</comment>
<comment type="subcellular location">
    <subcellularLocation>
        <location evidence="1">Endoplasmic reticulum membrane</location>
        <topology evidence="1">Single-pass type II membrane protein</topology>
    </subcellularLocation>
</comment>
<comment type="similarity">
    <text evidence="8">Belongs to the SPCS3 family.</text>
</comment>
<reference key="1">
    <citation type="journal article" date="2001" name="Genome Res.">
        <title>Towards a catalog of human genes and proteins: sequencing and analysis of 500 novel complete protein coding human cDNAs.</title>
        <authorList>
            <person name="Wiemann S."/>
            <person name="Weil B."/>
            <person name="Wellenreuther R."/>
            <person name="Gassenhuber J."/>
            <person name="Glassl S."/>
            <person name="Ansorge W."/>
            <person name="Boecher M."/>
            <person name="Bloecker H."/>
            <person name="Bauersachs S."/>
            <person name="Blum H."/>
            <person name="Lauber J."/>
            <person name="Duesterhoeft A."/>
            <person name="Beyer A."/>
            <person name="Koehrer K."/>
            <person name="Strack N."/>
            <person name="Mewes H.-W."/>
            <person name="Ottenwaelder B."/>
            <person name="Obermaier B."/>
            <person name="Tampe J."/>
            <person name="Heubner D."/>
            <person name="Wambutt R."/>
            <person name="Korn B."/>
            <person name="Klein M."/>
            <person name="Poustka A."/>
        </authorList>
    </citation>
    <scope>NUCLEOTIDE SEQUENCE [LARGE SCALE MRNA]</scope>
    <source>
        <tissue>Brain</tissue>
    </source>
</reference>
<reference key="2">
    <citation type="journal article" date="2004" name="Nat. Genet.">
        <title>Complete sequencing and characterization of 21,243 full-length human cDNAs.</title>
        <authorList>
            <person name="Ota T."/>
            <person name="Suzuki Y."/>
            <person name="Nishikawa T."/>
            <person name="Otsuki T."/>
            <person name="Sugiyama T."/>
            <person name="Irie R."/>
            <person name="Wakamatsu A."/>
            <person name="Hayashi K."/>
            <person name="Sato H."/>
            <person name="Nagai K."/>
            <person name="Kimura K."/>
            <person name="Makita H."/>
            <person name="Sekine M."/>
            <person name="Obayashi M."/>
            <person name="Nishi T."/>
            <person name="Shibahara T."/>
            <person name="Tanaka T."/>
            <person name="Ishii S."/>
            <person name="Yamamoto J."/>
            <person name="Saito K."/>
            <person name="Kawai Y."/>
            <person name="Isono Y."/>
            <person name="Nakamura Y."/>
            <person name="Nagahari K."/>
            <person name="Murakami K."/>
            <person name="Yasuda T."/>
            <person name="Iwayanagi T."/>
            <person name="Wagatsuma M."/>
            <person name="Shiratori A."/>
            <person name="Sudo H."/>
            <person name="Hosoiri T."/>
            <person name="Kaku Y."/>
            <person name="Kodaira H."/>
            <person name="Kondo H."/>
            <person name="Sugawara M."/>
            <person name="Takahashi M."/>
            <person name="Kanda K."/>
            <person name="Yokoi T."/>
            <person name="Furuya T."/>
            <person name="Kikkawa E."/>
            <person name="Omura Y."/>
            <person name="Abe K."/>
            <person name="Kamihara K."/>
            <person name="Katsuta N."/>
            <person name="Sato K."/>
            <person name="Tanikawa M."/>
            <person name="Yamazaki M."/>
            <person name="Ninomiya K."/>
            <person name="Ishibashi T."/>
            <person name="Yamashita H."/>
            <person name="Murakawa K."/>
            <person name="Fujimori K."/>
            <person name="Tanai H."/>
            <person name="Kimata M."/>
            <person name="Watanabe M."/>
            <person name="Hiraoka S."/>
            <person name="Chiba Y."/>
            <person name="Ishida S."/>
            <person name="Ono Y."/>
            <person name="Takiguchi S."/>
            <person name="Watanabe S."/>
            <person name="Yosida M."/>
            <person name="Hotuta T."/>
            <person name="Kusano J."/>
            <person name="Kanehori K."/>
            <person name="Takahashi-Fujii A."/>
            <person name="Hara H."/>
            <person name="Tanase T.-O."/>
            <person name="Nomura Y."/>
            <person name="Togiya S."/>
            <person name="Komai F."/>
            <person name="Hara R."/>
            <person name="Takeuchi K."/>
            <person name="Arita M."/>
            <person name="Imose N."/>
            <person name="Musashino K."/>
            <person name="Yuuki H."/>
            <person name="Oshima A."/>
            <person name="Sasaki N."/>
            <person name="Aotsuka S."/>
            <person name="Yoshikawa Y."/>
            <person name="Matsunawa H."/>
            <person name="Ichihara T."/>
            <person name="Shiohata N."/>
            <person name="Sano S."/>
            <person name="Moriya S."/>
            <person name="Momiyama H."/>
            <person name="Satoh N."/>
            <person name="Takami S."/>
            <person name="Terashima Y."/>
            <person name="Suzuki O."/>
            <person name="Nakagawa S."/>
            <person name="Senoh A."/>
            <person name="Mizoguchi H."/>
            <person name="Goto Y."/>
            <person name="Shimizu F."/>
            <person name="Wakebe H."/>
            <person name="Hishigaki H."/>
            <person name="Watanabe T."/>
            <person name="Sugiyama A."/>
            <person name="Takemoto M."/>
            <person name="Kawakami B."/>
            <person name="Yamazaki M."/>
            <person name="Watanabe K."/>
            <person name="Kumagai A."/>
            <person name="Itakura S."/>
            <person name="Fukuzumi Y."/>
            <person name="Fujimori Y."/>
            <person name="Komiyama M."/>
            <person name="Tashiro H."/>
            <person name="Tanigami A."/>
            <person name="Fujiwara T."/>
            <person name="Ono T."/>
            <person name="Yamada K."/>
            <person name="Fujii Y."/>
            <person name="Ozaki K."/>
            <person name="Hirao M."/>
            <person name="Ohmori Y."/>
            <person name="Kawabata A."/>
            <person name="Hikiji T."/>
            <person name="Kobatake N."/>
            <person name="Inagaki H."/>
            <person name="Ikema Y."/>
            <person name="Okamoto S."/>
            <person name="Okitani R."/>
            <person name="Kawakami T."/>
            <person name="Noguchi S."/>
            <person name="Itoh T."/>
            <person name="Shigeta K."/>
            <person name="Senba T."/>
            <person name="Matsumura K."/>
            <person name="Nakajima Y."/>
            <person name="Mizuno T."/>
            <person name="Morinaga M."/>
            <person name="Sasaki M."/>
            <person name="Togashi T."/>
            <person name="Oyama M."/>
            <person name="Hata H."/>
            <person name="Watanabe M."/>
            <person name="Komatsu T."/>
            <person name="Mizushima-Sugano J."/>
            <person name="Satoh T."/>
            <person name="Shirai Y."/>
            <person name="Takahashi Y."/>
            <person name="Nakagawa K."/>
            <person name="Okumura K."/>
            <person name="Nagase T."/>
            <person name="Nomura N."/>
            <person name="Kikuchi H."/>
            <person name="Masuho Y."/>
            <person name="Yamashita R."/>
            <person name="Nakai K."/>
            <person name="Yada T."/>
            <person name="Nakamura Y."/>
            <person name="Ohara O."/>
            <person name="Isogai T."/>
            <person name="Sugano S."/>
        </authorList>
    </citation>
    <scope>NUCLEOTIDE SEQUENCE [LARGE SCALE MRNA]</scope>
    <source>
        <tissue>Small intestine</tissue>
    </source>
</reference>
<reference key="3">
    <citation type="journal article" date="2003" name="Genome Res.">
        <title>The secreted protein discovery initiative (SPDI), a large-scale effort to identify novel human secreted and transmembrane proteins: a bioinformatics assessment.</title>
        <authorList>
            <person name="Clark H.F."/>
            <person name="Gurney A.L."/>
            <person name="Abaya E."/>
            <person name="Baker K."/>
            <person name="Baldwin D.T."/>
            <person name="Brush J."/>
            <person name="Chen J."/>
            <person name="Chow B."/>
            <person name="Chui C."/>
            <person name="Crowley C."/>
            <person name="Currell B."/>
            <person name="Deuel B."/>
            <person name="Dowd P."/>
            <person name="Eaton D."/>
            <person name="Foster J.S."/>
            <person name="Grimaldi C."/>
            <person name="Gu Q."/>
            <person name="Hass P.E."/>
            <person name="Heldens S."/>
            <person name="Huang A."/>
            <person name="Kim H.S."/>
            <person name="Klimowski L."/>
            <person name="Jin Y."/>
            <person name="Johnson S."/>
            <person name="Lee J."/>
            <person name="Lewis L."/>
            <person name="Liao D."/>
            <person name="Mark M.R."/>
            <person name="Robbie E."/>
            <person name="Sanchez C."/>
            <person name="Schoenfeld J."/>
            <person name="Seshagiri S."/>
            <person name="Simmons L."/>
            <person name="Singh J."/>
            <person name="Smith V."/>
            <person name="Stinson J."/>
            <person name="Vagts A."/>
            <person name="Vandlen R.L."/>
            <person name="Watanabe C."/>
            <person name="Wieand D."/>
            <person name="Woods K."/>
            <person name="Xie M.-H."/>
            <person name="Yansura D.G."/>
            <person name="Yi S."/>
            <person name="Yu G."/>
            <person name="Yuan J."/>
            <person name="Zhang M."/>
            <person name="Zhang Z."/>
            <person name="Goddard A.D."/>
            <person name="Wood W.I."/>
            <person name="Godowski P.J."/>
            <person name="Gray A.M."/>
        </authorList>
    </citation>
    <scope>NUCLEOTIDE SEQUENCE [LARGE SCALE MRNA]</scope>
</reference>
<reference key="4">
    <citation type="journal article" date="2004" name="Genome Res.">
        <title>The status, quality, and expansion of the NIH full-length cDNA project: the Mammalian Gene Collection (MGC).</title>
        <authorList>
            <consortium name="The MGC Project Team"/>
        </authorList>
    </citation>
    <scope>NUCLEOTIDE SEQUENCE [LARGE SCALE MRNA]</scope>
    <source>
        <tissue>Pancreas</tissue>
    </source>
</reference>
<reference key="5">
    <citation type="journal article" date="2009" name="J. Proteome Res.">
        <title>Glycoproteomics analysis of human liver tissue by combination of multiple enzyme digestion and hydrazide chemistry.</title>
        <authorList>
            <person name="Chen R."/>
            <person name="Jiang X."/>
            <person name="Sun D."/>
            <person name="Han G."/>
            <person name="Wang F."/>
            <person name="Ye M."/>
            <person name="Wang L."/>
            <person name="Zou H."/>
        </authorList>
    </citation>
    <scope>GLYCOSYLATION [LARGE SCALE ANALYSIS] AT ASN-141</scope>
    <source>
        <tissue>Liver</tissue>
    </source>
</reference>
<reference key="6">
    <citation type="journal article" date="2011" name="BMC Syst. Biol.">
        <title>Initial characterization of the human central proteome.</title>
        <authorList>
            <person name="Burkard T.R."/>
            <person name="Planyavsky M."/>
            <person name="Kaupe I."/>
            <person name="Breitwieser F.P."/>
            <person name="Buerckstuemmer T."/>
            <person name="Bennett K.L."/>
            <person name="Superti-Furga G."/>
            <person name="Colinge J."/>
        </authorList>
    </citation>
    <scope>IDENTIFICATION BY MASS SPECTROMETRY [LARGE SCALE ANALYSIS]</scope>
</reference>
<reference key="7">
    <citation type="journal article" date="2012" name="Proc. Natl. Acad. Sci. U.S.A.">
        <title>N-terminal acetylome analyses and functional insights of the N-terminal acetyltransferase NatB.</title>
        <authorList>
            <person name="Van Damme P."/>
            <person name="Lasa M."/>
            <person name="Polevoda B."/>
            <person name="Gazquez C."/>
            <person name="Elosegui-Artola A."/>
            <person name="Kim D.S."/>
            <person name="De Juan-Pardo E."/>
            <person name="Demeyer K."/>
            <person name="Hole K."/>
            <person name="Larrea E."/>
            <person name="Timmerman E."/>
            <person name="Prieto J."/>
            <person name="Arnesen T."/>
            <person name="Sherman F."/>
            <person name="Gevaert K."/>
            <person name="Aldabe R."/>
        </authorList>
    </citation>
    <scope>IDENTIFICATION BY MASS SPECTROMETRY [LARGE SCALE ANALYSIS]</scope>
</reference>
<reference key="8">
    <citation type="journal article" date="2014" name="J. Proteomics">
        <title>An enzyme assisted RP-RPLC approach for in-depth analysis of human liver phosphoproteome.</title>
        <authorList>
            <person name="Bian Y."/>
            <person name="Song C."/>
            <person name="Cheng K."/>
            <person name="Dong M."/>
            <person name="Wang F."/>
            <person name="Huang J."/>
            <person name="Sun D."/>
            <person name="Wang L."/>
            <person name="Ye M."/>
            <person name="Zou H."/>
        </authorList>
    </citation>
    <scope>IDENTIFICATION BY MASS SPECTROMETRY [LARGE SCALE ANALYSIS]</scope>
    <source>
        <tissue>Liver</tissue>
    </source>
</reference>
<reference key="9">
    <citation type="journal article" date="2015" name="Proteomics">
        <title>N-terminome analysis of the human mitochondrial proteome.</title>
        <authorList>
            <person name="Vaca Jacome A.S."/>
            <person name="Rabilloud T."/>
            <person name="Schaeffer-Reiss C."/>
            <person name="Rompais M."/>
            <person name="Ayoub D."/>
            <person name="Lane L."/>
            <person name="Bairoch A."/>
            <person name="Van Dorsselaer A."/>
            <person name="Carapito C."/>
        </authorList>
    </citation>
    <scope>IDENTIFICATION BY MASS SPECTROMETRY [LARGE SCALE ANALYSIS]</scope>
</reference>
<reference key="10">
    <citation type="journal article" date="2016" name="Mol. Cell">
        <title>Inverting the topology of a transmembrane protein by regulating the translocation of the first transmembrane helix.</title>
        <authorList>
            <person name="Chen Q."/>
            <person name="Denard B."/>
            <person name="Lee C.E."/>
            <person name="Han S."/>
            <person name="Ye J.S."/>
            <person name="Ye J."/>
        </authorList>
    </citation>
    <scope>FUNCTION</scope>
</reference>
<reference key="11">
    <citation type="journal article" date="2016" name="Nature">
        <title>A CRISPR screen defines a signal peptide processing pathway required by flaviviruses.</title>
        <authorList>
            <person name="Zhang R."/>
            <person name="Miner J.J."/>
            <person name="Gorman M.J."/>
            <person name="Rausch K."/>
            <person name="Ramage H."/>
            <person name="White J.P."/>
            <person name="Zuiani A."/>
            <person name="Zhang P."/>
            <person name="Fernandez E."/>
            <person name="Zhang Q."/>
            <person name="Dowd K.A."/>
            <person name="Pierson T.C."/>
            <person name="Cherry S."/>
            <person name="Diamond M.S."/>
        </authorList>
    </citation>
    <scope>FUNCTION (MICROBIAL INFECTION)</scope>
</reference>
<reference evidence="9 10" key="12">
    <citation type="journal article" date="2021" name="Mol. Cell">
        <title>Structure of the human signal peptidase complex reveals the determinants for signal peptide cleavage.</title>
        <authorList>
            <person name="Liaci A.M."/>
            <person name="Steigenberger B."/>
            <person name="Telles de Souza P.C."/>
            <person name="Tamara S."/>
            <person name="Groellers-Mulderij M."/>
            <person name="Ogrissek P."/>
            <person name="Marrink S.J."/>
            <person name="Scheltema R.A."/>
            <person name="Foerster F."/>
        </authorList>
    </citation>
    <scope>STRUCTURE BY ELECTRON MICROSCOPY (4.9 ANGSTROMS)</scope>
    <scope>FUNCTION</scope>
    <scope>IDENTIFICATION IN THE SIGNAL PEPTIDASE COMPLEX</scope>
    <scope>GLYCOSYLATION AT ASN-141</scope>
</reference>
<name>SPCS3_HUMAN</name>
<keyword id="KW-0002">3D-structure</keyword>
<keyword id="KW-0256">Endoplasmic reticulum</keyword>
<keyword id="KW-0325">Glycoprotein</keyword>
<keyword id="KW-0472">Membrane</keyword>
<keyword id="KW-1267">Proteomics identification</keyword>
<keyword id="KW-1185">Reference proteome</keyword>
<keyword id="KW-0735">Signal-anchor</keyword>
<keyword id="KW-0812">Transmembrane</keyword>
<keyword id="KW-1133">Transmembrane helix</keyword>
<proteinExistence type="evidence at protein level"/>
<feature type="chain" id="PRO_0000218938" description="Signal peptidase complex subunit 3">
    <location>
        <begin position="1"/>
        <end position="180"/>
    </location>
</feature>
<feature type="topological domain" description="Cytoplasmic" evidence="1">
    <location>
        <begin position="1"/>
        <end position="11"/>
    </location>
</feature>
<feature type="transmembrane region" description="Helical; Signal-anchor for type II membrane protein" evidence="3">
    <location>
        <begin position="12"/>
        <end position="32"/>
    </location>
</feature>
<feature type="topological domain" description="Lumenal" evidence="1">
    <location>
        <begin position="33"/>
        <end position="180"/>
    </location>
</feature>
<feature type="glycosylation site" description="N-linked (GlcNAc...) asparagine" evidence="4 7">
    <location>
        <position position="141"/>
    </location>
</feature>
<feature type="sequence conflict" description="In Ref. 1; CAB66595." evidence="8" ref="1">
    <original>F</original>
    <variation>S</variation>
    <location>
        <position position="68"/>
    </location>
</feature>
<accession>P61009</accession>
<accession>P12280</accession>
<accession>Q9H0S7</accession>